<feature type="chain" id="PRO_1000121904" description="Glutamate-1-semialdehyde 2,1-aminomutase">
    <location>
        <begin position="1"/>
        <end position="426"/>
    </location>
</feature>
<feature type="modified residue" description="N6-(pyridoxal phosphate)lysine" evidence="1">
    <location>
        <position position="265"/>
    </location>
</feature>
<comment type="catalytic activity">
    <reaction evidence="1">
        <text>(S)-4-amino-5-oxopentanoate = 5-aminolevulinate</text>
        <dbReference type="Rhea" id="RHEA:14265"/>
        <dbReference type="ChEBI" id="CHEBI:57501"/>
        <dbReference type="ChEBI" id="CHEBI:356416"/>
        <dbReference type="EC" id="5.4.3.8"/>
    </reaction>
</comment>
<comment type="cofactor">
    <cofactor evidence="1">
        <name>pyridoxal 5'-phosphate</name>
        <dbReference type="ChEBI" id="CHEBI:597326"/>
    </cofactor>
</comment>
<comment type="pathway">
    <text evidence="1">Porphyrin-containing compound metabolism; protoporphyrin-IX biosynthesis; 5-aminolevulinate from L-glutamyl-tRNA(Glu): step 2/2.</text>
</comment>
<comment type="subunit">
    <text evidence="1">Homodimer.</text>
</comment>
<comment type="subcellular location">
    <subcellularLocation>
        <location evidence="1">Cytoplasm</location>
    </subcellularLocation>
</comment>
<comment type="similarity">
    <text evidence="1">Belongs to the class-III pyridoxal-phosphate-dependent aminotransferase family. HemL subfamily.</text>
</comment>
<organism>
    <name type="scientific">Neisseria gonorrhoeae (strain NCCP11945)</name>
    <dbReference type="NCBI Taxonomy" id="521006"/>
    <lineage>
        <taxon>Bacteria</taxon>
        <taxon>Pseudomonadati</taxon>
        <taxon>Pseudomonadota</taxon>
        <taxon>Betaproteobacteria</taxon>
        <taxon>Neisseriales</taxon>
        <taxon>Neisseriaceae</taxon>
        <taxon>Neisseria</taxon>
    </lineage>
</organism>
<protein>
    <recommendedName>
        <fullName evidence="1">Glutamate-1-semialdehyde 2,1-aminomutase</fullName>
        <shortName evidence="1">GSA</shortName>
        <ecNumber evidence="1">5.4.3.8</ecNumber>
    </recommendedName>
    <alternativeName>
        <fullName evidence="1">Glutamate-1-semialdehyde aminotransferase</fullName>
        <shortName evidence="1">GSA-AT</shortName>
    </alternativeName>
</protein>
<keyword id="KW-0963">Cytoplasm</keyword>
<keyword id="KW-0413">Isomerase</keyword>
<keyword id="KW-0627">Porphyrin biosynthesis</keyword>
<keyword id="KW-0663">Pyridoxal phosphate</keyword>
<dbReference type="EC" id="5.4.3.8" evidence="1"/>
<dbReference type="EMBL" id="CP001050">
    <property type="protein sequence ID" value="ACF28753.1"/>
    <property type="molecule type" value="Genomic_DNA"/>
</dbReference>
<dbReference type="RefSeq" id="WP_012503332.1">
    <property type="nucleotide sequence ID" value="NC_011035.1"/>
</dbReference>
<dbReference type="SMR" id="B4RNX2"/>
<dbReference type="KEGG" id="ngk:NGK_0050"/>
<dbReference type="HOGENOM" id="CLU_016922_1_5_4"/>
<dbReference type="UniPathway" id="UPA00251">
    <property type="reaction ID" value="UER00317"/>
</dbReference>
<dbReference type="Proteomes" id="UP000002564">
    <property type="component" value="Chromosome"/>
</dbReference>
<dbReference type="GO" id="GO:0005737">
    <property type="term" value="C:cytoplasm"/>
    <property type="evidence" value="ECO:0007669"/>
    <property type="project" value="UniProtKB-SubCell"/>
</dbReference>
<dbReference type="GO" id="GO:0042286">
    <property type="term" value="F:glutamate-1-semialdehyde 2,1-aminomutase activity"/>
    <property type="evidence" value="ECO:0007669"/>
    <property type="project" value="UniProtKB-UniRule"/>
</dbReference>
<dbReference type="GO" id="GO:0030170">
    <property type="term" value="F:pyridoxal phosphate binding"/>
    <property type="evidence" value="ECO:0007669"/>
    <property type="project" value="InterPro"/>
</dbReference>
<dbReference type="GO" id="GO:0008483">
    <property type="term" value="F:transaminase activity"/>
    <property type="evidence" value="ECO:0007669"/>
    <property type="project" value="InterPro"/>
</dbReference>
<dbReference type="GO" id="GO:0006782">
    <property type="term" value="P:protoporphyrinogen IX biosynthetic process"/>
    <property type="evidence" value="ECO:0007669"/>
    <property type="project" value="UniProtKB-UniRule"/>
</dbReference>
<dbReference type="CDD" id="cd00610">
    <property type="entry name" value="OAT_like"/>
    <property type="match status" value="1"/>
</dbReference>
<dbReference type="FunFam" id="3.40.640.10:FF:000021">
    <property type="entry name" value="Glutamate-1-semialdehyde 2,1-aminomutase"/>
    <property type="match status" value="1"/>
</dbReference>
<dbReference type="Gene3D" id="3.90.1150.10">
    <property type="entry name" value="Aspartate Aminotransferase, domain 1"/>
    <property type="match status" value="1"/>
</dbReference>
<dbReference type="Gene3D" id="3.40.640.10">
    <property type="entry name" value="Type I PLP-dependent aspartate aminotransferase-like (Major domain)"/>
    <property type="match status" value="1"/>
</dbReference>
<dbReference type="HAMAP" id="MF_00375">
    <property type="entry name" value="HemL_aminotrans_3"/>
    <property type="match status" value="1"/>
</dbReference>
<dbReference type="InterPro" id="IPR004639">
    <property type="entry name" value="4pyrrol_synth_GluAld_NH2Trfase"/>
</dbReference>
<dbReference type="InterPro" id="IPR005814">
    <property type="entry name" value="Aminotrans_3"/>
</dbReference>
<dbReference type="InterPro" id="IPR049704">
    <property type="entry name" value="Aminotrans_3_PPA_site"/>
</dbReference>
<dbReference type="InterPro" id="IPR015424">
    <property type="entry name" value="PyrdxlP-dep_Trfase"/>
</dbReference>
<dbReference type="InterPro" id="IPR015421">
    <property type="entry name" value="PyrdxlP-dep_Trfase_major"/>
</dbReference>
<dbReference type="InterPro" id="IPR015422">
    <property type="entry name" value="PyrdxlP-dep_Trfase_small"/>
</dbReference>
<dbReference type="NCBIfam" id="TIGR00713">
    <property type="entry name" value="hemL"/>
    <property type="match status" value="1"/>
</dbReference>
<dbReference type="NCBIfam" id="NF000818">
    <property type="entry name" value="PRK00062.1"/>
    <property type="match status" value="1"/>
</dbReference>
<dbReference type="PANTHER" id="PTHR43713">
    <property type="entry name" value="GLUTAMATE-1-SEMIALDEHYDE 2,1-AMINOMUTASE"/>
    <property type="match status" value="1"/>
</dbReference>
<dbReference type="PANTHER" id="PTHR43713:SF3">
    <property type="entry name" value="GLUTAMATE-1-SEMIALDEHYDE 2,1-AMINOMUTASE 1, CHLOROPLASTIC-RELATED"/>
    <property type="match status" value="1"/>
</dbReference>
<dbReference type="Pfam" id="PF00202">
    <property type="entry name" value="Aminotran_3"/>
    <property type="match status" value="1"/>
</dbReference>
<dbReference type="SUPFAM" id="SSF53383">
    <property type="entry name" value="PLP-dependent transferases"/>
    <property type="match status" value="1"/>
</dbReference>
<dbReference type="PROSITE" id="PS00600">
    <property type="entry name" value="AA_TRANSFER_CLASS_3"/>
    <property type="match status" value="1"/>
</dbReference>
<sequence>MNRNEILFDRAKAIIPGGVNSPVRAFGSVGGVPRFIKKAEGAYVWDENGTRYTDYVGSWGPAIVGHAHPEVVEAVREAALGGLSFGAPTEGEIAIAEQIAEIMPSVERLRLVSSGTEATMTAIRLARGFTGRDKIIKFEGCYHGHSDSLLVKAGSGLLTFGNPSSAGVPADFTKHTLVLEYNNIAQLEEAFAQSGDEIACVIVEPFVGNMNLVRPTEAFVKALRGLTEKHGAVLIYDEVMTGFRVALGGAQSLHGITPDLTTMGKVIGGGMPLAAFGGRKDIMECISPLAGVYQAGTLSGNPIAVAAGLKTLEIIQREGFYENLTALTQRLANGIAAAKAHGIEFAADSVGGMFGLYFAAHVPRNYADMARSNIDAFKRFFHGMLDRGIAFGPSAYEAGFVSAAHTPELIDETVAVAVEVFKAMAA</sequence>
<accession>B4RNX2</accession>
<evidence type="ECO:0000255" key="1">
    <source>
        <dbReference type="HAMAP-Rule" id="MF_00375"/>
    </source>
</evidence>
<reference key="1">
    <citation type="journal article" date="2008" name="J. Bacteriol.">
        <title>Complete genome sequence of Neisseria gonorrhoeae NCCP11945.</title>
        <authorList>
            <person name="Chung G.T."/>
            <person name="Yoo J.S."/>
            <person name="Oh H.B."/>
            <person name="Lee Y.S."/>
            <person name="Cha S.H."/>
            <person name="Kim S.J."/>
            <person name="Yoo C.K."/>
        </authorList>
    </citation>
    <scope>NUCLEOTIDE SEQUENCE [LARGE SCALE GENOMIC DNA]</scope>
    <source>
        <strain>NCCP11945</strain>
    </source>
</reference>
<proteinExistence type="inferred from homology"/>
<gene>
    <name evidence="1" type="primary">hemL</name>
    <name type="ordered locus">NGK_0050</name>
</gene>
<name>GSA_NEIG2</name>